<organism>
    <name type="scientific">Paracentrotus lividus</name>
    <name type="common">Common sea urchin</name>
    <dbReference type="NCBI Taxonomy" id="7656"/>
    <lineage>
        <taxon>Eukaryota</taxon>
        <taxon>Metazoa</taxon>
        <taxon>Echinodermata</taxon>
        <taxon>Eleutherozoa</taxon>
        <taxon>Echinozoa</taxon>
        <taxon>Echinoidea</taxon>
        <taxon>Euechinoidea</taxon>
        <taxon>Echinacea</taxon>
        <taxon>Camarodonta</taxon>
        <taxon>Echinidea</taxon>
        <taxon>Echinidae</taxon>
        <taxon>Paracentrotus</taxon>
    </lineage>
</organism>
<comment type="function">
    <text>Core component of nucleosome. Nucleosomes wrap and compact DNA into chromatin, limiting DNA accessibility to the cellular machineries which require DNA as a template. Histones thereby play a central role in transcription regulation, DNA repair, DNA replication and chromosomal stability. DNA accessibility is regulated via a complex set of post-translational modifications of histones, also called histone code, and nucleosome remodeling.</text>
</comment>
<comment type="subunit">
    <text>The nucleosome is a histone octamer containing two molecules each of H2A, H2B, H3 and H4 assembled in one H3-H4 heterotetramer and two H2A-H2B heterodimers. The octamer wraps approximately 147 bp of DNA.</text>
</comment>
<comment type="subcellular location">
    <subcellularLocation>
        <location>Nucleus</location>
    </subcellularLocation>
    <subcellularLocation>
        <location>Chromosome</location>
    </subcellularLocation>
</comment>
<comment type="PTM">
    <text evidence="1">Monoubiquitination of Lys-119 gives a specific tag for epigenetic transcriptional repression.</text>
</comment>
<comment type="PTM">
    <text evidence="1">Phosphorylation of Ser-2 directly represses transcription.</text>
</comment>
<comment type="similarity">
    <text evidence="3">Belongs to the histone H2A family.</text>
</comment>
<protein>
    <recommendedName>
        <fullName>Histone H2A</fullName>
    </recommendedName>
</protein>
<reference key="1">
    <citation type="journal article" date="1989" name="Proc. Natl. Acad. Sci. U.S.A.">
        <title>Cis-acting elements of the sea urchin histone H2A modulator bind transcriptional factors.</title>
        <authorList>
            <person name="Palla F."/>
            <person name="Casano C."/>
            <person name="Albanese I."/>
            <person name="Anello L."/>
            <person name="Gianguzza F."/>
            <person name="di Bernardo M.G."/>
            <person name="Bonura C."/>
            <person name="Spinelli G."/>
        </authorList>
    </citation>
    <scope>NUCLEOTIDE SEQUENCE [GENOMIC DNA]</scope>
</reference>
<sequence length="124" mass="13304">MSGRGKSGKARTKAKSRSSRAGLQFPVGRVHRFLRKGNYAKRVGGGAPVYMAAVLEYLTAEILELAGNAARDNKKSRIIPRHLQLAVRNDEELNKLLGGVTIAQGGVLPNIQAVLLPKKTGKSS</sequence>
<accession>P13630</accession>
<proteinExistence type="inferred from homology"/>
<name>H2A_PARLI</name>
<dbReference type="EMBL" id="M25281">
    <property type="protein sequence ID" value="AAA65844.1"/>
    <property type="molecule type" value="Genomic_DNA"/>
</dbReference>
<dbReference type="SMR" id="P13630"/>
<dbReference type="GO" id="GO:0000786">
    <property type="term" value="C:nucleosome"/>
    <property type="evidence" value="ECO:0007669"/>
    <property type="project" value="UniProtKB-KW"/>
</dbReference>
<dbReference type="GO" id="GO:0005634">
    <property type="term" value="C:nucleus"/>
    <property type="evidence" value="ECO:0007669"/>
    <property type="project" value="UniProtKB-SubCell"/>
</dbReference>
<dbReference type="GO" id="GO:0003677">
    <property type="term" value="F:DNA binding"/>
    <property type="evidence" value="ECO:0007669"/>
    <property type="project" value="UniProtKB-KW"/>
</dbReference>
<dbReference type="GO" id="GO:0046982">
    <property type="term" value="F:protein heterodimerization activity"/>
    <property type="evidence" value="ECO:0007669"/>
    <property type="project" value="InterPro"/>
</dbReference>
<dbReference type="GO" id="GO:0030527">
    <property type="term" value="F:structural constituent of chromatin"/>
    <property type="evidence" value="ECO:0007669"/>
    <property type="project" value="InterPro"/>
</dbReference>
<dbReference type="CDD" id="cd00074">
    <property type="entry name" value="HFD_H2A"/>
    <property type="match status" value="1"/>
</dbReference>
<dbReference type="FunFam" id="1.10.20.10:FF:000020">
    <property type="entry name" value="Histone H2A"/>
    <property type="match status" value="1"/>
</dbReference>
<dbReference type="Gene3D" id="1.10.20.10">
    <property type="entry name" value="Histone, subunit A"/>
    <property type="match status" value="1"/>
</dbReference>
<dbReference type="InterPro" id="IPR009072">
    <property type="entry name" value="Histone-fold"/>
</dbReference>
<dbReference type="InterPro" id="IPR002119">
    <property type="entry name" value="Histone_H2A"/>
</dbReference>
<dbReference type="InterPro" id="IPR007125">
    <property type="entry name" value="Histone_H2A/H2B/H3"/>
</dbReference>
<dbReference type="InterPro" id="IPR032454">
    <property type="entry name" value="Histone_H2A_C"/>
</dbReference>
<dbReference type="InterPro" id="IPR032458">
    <property type="entry name" value="Histone_H2A_CS"/>
</dbReference>
<dbReference type="PANTHER" id="PTHR23430">
    <property type="entry name" value="HISTONE H2A"/>
    <property type="match status" value="1"/>
</dbReference>
<dbReference type="Pfam" id="PF00125">
    <property type="entry name" value="Histone"/>
    <property type="match status" value="1"/>
</dbReference>
<dbReference type="Pfam" id="PF16211">
    <property type="entry name" value="Histone_H2A_C"/>
    <property type="match status" value="1"/>
</dbReference>
<dbReference type="PRINTS" id="PR00620">
    <property type="entry name" value="HISTONEH2A"/>
</dbReference>
<dbReference type="SMART" id="SM00414">
    <property type="entry name" value="H2A"/>
    <property type="match status" value="1"/>
</dbReference>
<dbReference type="SUPFAM" id="SSF47113">
    <property type="entry name" value="Histone-fold"/>
    <property type="match status" value="1"/>
</dbReference>
<dbReference type="PROSITE" id="PS00046">
    <property type="entry name" value="HISTONE_H2A"/>
    <property type="match status" value="1"/>
</dbReference>
<keyword id="KW-0007">Acetylation</keyword>
<keyword id="KW-0158">Chromosome</keyword>
<keyword id="KW-0238">DNA-binding</keyword>
<keyword id="KW-1017">Isopeptide bond</keyword>
<keyword id="KW-0488">Methylation</keyword>
<keyword id="KW-0544">Nucleosome core</keyword>
<keyword id="KW-0539">Nucleus</keyword>
<keyword id="KW-0597">Phosphoprotein</keyword>
<keyword id="KW-0832">Ubl conjugation</keyword>
<evidence type="ECO:0000250" key="1"/>
<evidence type="ECO:0000256" key="2">
    <source>
        <dbReference type="SAM" id="MobiDB-lite"/>
    </source>
</evidence>
<evidence type="ECO:0000305" key="3"/>
<feature type="initiator methionine" description="Removed" evidence="1">
    <location>
        <position position="1"/>
    </location>
</feature>
<feature type="chain" id="PRO_0000055262" description="Histone H2A">
    <location>
        <begin position="2"/>
        <end position="124"/>
    </location>
</feature>
<feature type="region of interest" description="Disordered" evidence="2">
    <location>
        <begin position="1"/>
        <end position="21"/>
    </location>
</feature>
<feature type="compositionally biased region" description="Basic residues" evidence="2">
    <location>
        <begin position="1"/>
        <end position="18"/>
    </location>
</feature>
<feature type="modified residue" description="N-acetylserine" evidence="1">
    <location>
        <position position="2"/>
    </location>
</feature>
<feature type="modified residue" description="Phosphoserine" evidence="1">
    <location>
        <position position="2"/>
    </location>
</feature>
<feature type="modified residue" description="N5-methylglutamine" evidence="1">
    <location>
        <position position="104"/>
    </location>
</feature>
<feature type="cross-link" description="Glycyl lysine isopeptide (Lys-Gly) (interchain with G-Cter in ubiquitin)" evidence="1">
    <location>
        <position position="119"/>
    </location>
</feature>